<sequence>MLILTRRVGESLHIGDDIKITLLGIKGNQVRIGIDAPRDVEVHREEIYDRIRRETRKANRRTAEETLDQASRLLSQK</sequence>
<keyword id="KW-1005">Bacterial flagellum biogenesis</keyword>
<keyword id="KW-0963">Cytoplasm</keyword>
<keyword id="KW-1185">Reference proteome</keyword>
<keyword id="KW-0678">Repressor</keyword>
<keyword id="KW-0694">RNA-binding</keyword>
<keyword id="KW-0810">Translation regulation</keyword>
<dbReference type="EMBL" id="CP000471">
    <property type="protein sequence ID" value="ABK45583.1"/>
    <property type="molecule type" value="Genomic_DNA"/>
</dbReference>
<dbReference type="RefSeq" id="WP_011714646.1">
    <property type="nucleotide sequence ID" value="NC_008576.1"/>
</dbReference>
<dbReference type="SMR" id="A0LC90"/>
<dbReference type="STRING" id="156889.Mmc1_3093"/>
<dbReference type="KEGG" id="mgm:Mmc1_3093"/>
<dbReference type="eggNOG" id="COG1551">
    <property type="taxonomic scope" value="Bacteria"/>
</dbReference>
<dbReference type="HOGENOM" id="CLU_164837_0_1_5"/>
<dbReference type="OrthoDB" id="9809061at2"/>
<dbReference type="Proteomes" id="UP000002586">
    <property type="component" value="Chromosome"/>
</dbReference>
<dbReference type="GO" id="GO:0005829">
    <property type="term" value="C:cytosol"/>
    <property type="evidence" value="ECO:0007669"/>
    <property type="project" value="TreeGrafter"/>
</dbReference>
<dbReference type="GO" id="GO:0048027">
    <property type="term" value="F:mRNA 5'-UTR binding"/>
    <property type="evidence" value="ECO:0007669"/>
    <property type="project" value="UniProtKB-UniRule"/>
</dbReference>
<dbReference type="GO" id="GO:0044781">
    <property type="term" value="P:bacterial-type flagellum organization"/>
    <property type="evidence" value="ECO:0007669"/>
    <property type="project" value="UniProtKB-KW"/>
</dbReference>
<dbReference type="GO" id="GO:0006402">
    <property type="term" value="P:mRNA catabolic process"/>
    <property type="evidence" value="ECO:0007669"/>
    <property type="project" value="InterPro"/>
</dbReference>
<dbReference type="GO" id="GO:0045947">
    <property type="term" value="P:negative regulation of translational initiation"/>
    <property type="evidence" value="ECO:0007669"/>
    <property type="project" value="UniProtKB-UniRule"/>
</dbReference>
<dbReference type="GO" id="GO:1902208">
    <property type="term" value="P:regulation of bacterial-type flagellum assembly"/>
    <property type="evidence" value="ECO:0007669"/>
    <property type="project" value="UniProtKB-UniRule"/>
</dbReference>
<dbReference type="GO" id="GO:0006109">
    <property type="term" value="P:regulation of carbohydrate metabolic process"/>
    <property type="evidence" value="ECO:0007669"/>
    <property type="project" value="InterPro"/>
</dbReference>
<dbReference type="FunFam" id="2.60.40.4380:FF:000002">
    <property type="entry name" value="Translational regulator CsrA"/>
    <property type="match status" value="1"/>
</dbReference>
<dbReference type="Gene3D" id="2.60.40.4380">
    <property type="entry name" value="Translational regulator CsrA"/>
    <property type="match status" value="1"/>
</dbReference>
<dbReference type="HAMAP" id="MF_00167">
    <property type="entry name" value="CsrA"/>
    <property type="match status" value="1"/>
</dbReference>
<dbReference type="InterPro" id="IPR003751">
    <property type="entry name" value="CsrA"/>
</dbReference>
<dbReference type="InterPro" id="IPR036107">
    <property type="entry name" value="CsrA_sf"/>
</dbReference>
<dbReference type="NCBIfam" id="TIGR00202">
    <property type="entry name" value="csrA"/>
    <property type="match status" value="1"/>
</dbReference>
<dbReference type="NCBIfam" id="NF002469">
    <property type="entry name" value="PRK01712.1"/>
    <property type="match status" value="1"/>
</dbReference>
<dbReference type="PANTHER" id="PTHR34984">
    <property type="entry name" value="CARBON STORAGE REGULATOR"/>
    <property type="match status" value="1"/>
</dbReference>
<dbReference type="PANTHER" id="PTHR34984:SF1">
    <property type="entry name" value="CARBON STORAGE REGULATOR"/>
    <property type="match status" value="1"/>
</dbReference>
<dbReference type="Pfam" id="PF02599">
    <property type="entry name" value="CsrA"/>
    <property type="match status" value="1"/>
</dbReference>
<dbReference type="SUPFAM" id="SSF117130">
    <property type="entry name" value="CsrA-like"/>
    <property type="match status" value="1"/>
</dbReference>
<gene>
    <name evidence="1" type="primary">csrA</name>
    <name type="ordered locus">Mmc1_3093</name>
</gene>
<comment type="function">
    <text evidence="1">A translational regulator that binds mRNA to regulate translation initiation and/or mRNA stability. Usually binds in the 5'-UTR at or near the Shine-Dalgarno sequence preventing ribosome-binding, thus repressing translation. Its main target seems to be the major flagellin gene, while its function is anatagonized by FliW.</text>
</comment>
<comment type="subunit">
    <text evidence="1">Homodimer; the beta-strands of each monomer intercalate to form a hydrophobic core, while the alpha-helices form wings that extend away from the core.</text>
</comment>
<comment type="subcellular location">
    <subcellularLocation>
        <location evidence="1">Cytoplasm</location>
    </subcellularLocation>
</comment>
<comment type="similarity">
    <text evidence="1">Belongs to the CsrA/RsmA family.</text>
</comment>
<accession>A0LC90</accession>
<protein>
    <recommendedName>
        <fullName evidence="1">Translational regulator CsrA</fullName>
    </recommendedName>
</protein>
<reference key="1">
    <citation type="journal article" date="2009" name="Appl. Environ. Microbiol.">
        <title>Complete genome sequence of the chemolithoautotrophic marine magnetotactic coccus strain MC-1.</title>
        <authorList>
            <person name="Schubbe S."/>
            <person name="Williams T.J."/>
            <person name="Xie G."/>
            <person name="Kiss H.E."/>
            <person name="Brettin T.S."/>
            <person name="Martinez D."/>
            <person name="Ross C.A."/>
            <person name="Schuler D."/>
            <person name="Cox B.L."/>
            <person name="Nealson K.H."/>
            <person name="Bazylinski D.A."/>
        </authorList>
    </citation>
    <scope>NUCLEOTIDE SEQUENCE [LARGE SCALE GENOMIC DNA]</scope>
    <source>
        <strain>ATCC BAA-1437 / JCM 17883 / MC-1</strain>
    </source>
</reference>
<feature type="chain" id="PRO_1000023398" description="Translational regulator CsrA">
    <location>
        <begin position="1"/>
        <end position="77"/>
    </location>
</feature>
<feature type="region of interest" description="Disordered" evidence="2">
    <location>
        <begin position="58"/>
        <end position="77"/>
    </location>
</feature>
<feature type="compositionally biased region" description="Polar residues" evidence="2">
    <location>
        <begin position="68"/>
        <end position="77"/>
    </location>
</feature>
<organism>
    <name type="scientific">Magnetococcus marinus (strain ATCC BAA-1437 / JCM 17883 / MC-1)</name>
    <dbReference type="NCBI Taxonomy" id="156889"/>
    <lineage>
        <taxon>Bacteria</taxon>
        <taxon>Pseudomonadati</taxon>
        <taxon>Pseudomonadota</taxon>
        <taxon>Alphaproteobacteria</taxon>
        <taxon>Magnetococcales</taxon>
        <taxon>Magnetococcaceae</taxon>
        <taxon>Magnetococcus</taxon>
    </lineage>
</organism>
<proteinExistence type="inferred from homology"/>
<evidence type="ECO:0000255" key="1">
    <source>
        <dbReference type="HAMAP-Rule" id="MF_00167"/>
    </source>
</evidence>
<evidence type="ECO:0000256" key="2">
    <source>
        <dbReference type="SAM" id="MobiDB-lite"/>
    </source>
</evidence>
<name>CSRA_MAGMM</name>